<reference key="1">
    <citation type="journal article" date="1989" name="Virology">
        <title>A baculovirus polyhedral envelope-associated protein: genetic location, nucleotide sequence, and immunocytochemical characterization.</title>
        <authorList>
            <person name="Gombart A.F."/>
            <person name="Pearson M.N."/>
            <person name="Rohrmann G.F."/>
            <person name="Beaudreau G.S."/>
        </authorList>
    </citation>
    <scope>NUCLEOTIDE SEQUENCE [GENOMIC DNA]</scope>
    <scope>SUBCELLULAR LOCATION</scope>
</reference>
<reference key="2">
    <citation type="journal article" date="1989" name="J. Gen. Virol.">
        <title>Characterization of the genetic organization of the HindIII M region of the multicapsid nuclear polyhedrosis virus of Orgyia pseudotsugata reveals major differences among baculoviruses.</title>
        <authorList>
            <person name="Gombart A.F."/>
            <person name="Blissard G.W."/>
            <person name="Rohrmann G.F."/>
        </authorList>
    </citation>
    <scope>NUCLEOTIDE SEQUENCE [GENOMIC DNA]</scope>
</reference>
<reference key="3">
    <citation type="journal article" date="1997" name="Virology">
        <title>The sequence of the Orgyia pseudotsugata multinucleocapsid nuclear polyhedrosis virus genome.</title>
        <authorList>
            <person name="Ahrens C.H."/>
            <person name="Russell R.R."/>
            <person name="Funk C.J."/>
            <person name="Evans J."/>
            <person name="Harwood S."/>
            <person name="Rohrmann G.F."/>
        </authorList>
    </citation>
    <scope>NUCLEOTIDE SEQUENCE [LARGE SCALE GENOMIC DNA]</scope>
</reference>
<organismHost>
    <name type="scientific">Orgyia pseudotsugata</name>
    <name type="common">Douglas-fir tussock moth</name>
    <dbReference type="NCBI Taxonomy" id="33414"/>
</organismHost>
<feature type="chain" id="PRO_0000132939" description="Polyhedral envelope protein">
    <location>
        <begin position="1"/>
        <end position="297"/>
    </location>
</feature>
<organism>
    <name type="scientific">Orgyia pseudotsugata multicapsid polyhedrosis virus</name>
    <name type="common">OpMNPV</name>
    <dbReference type="NCBI Taxonomy" id="262177"/>
    <lineage>
        <taxon>Viruses</taxon>
        <taxon>Viruses incertae sedis</taxon>
        <taxon>Naldaviricetes</taxon>
        <taxon>Lefavirales</taxon>
        <taxon>Baculoviridae</taxon>
        <taxon>Alphabaculovirus</taxon>
        <taxon>Alphabaculovirus orpseudotsugatae</taxon>
    </lineage>
</organism>
<evidence type="ECO:0000269" key="1">
    <source>
    </source>
</evidence>
<evidence type="ECO:0000305" key="2"/>
<keyword id="KW-0472">Membrane</keyword>
<keyword id="KW-1185">Reference proteome</keyword>
<keyword id="KW-0261">Viral envelope protein</keyword>
<keyword id="KW-0842">Viral occlusion body</keyword>
<keyword id="KW-0946">Virion</keyword>
<sequence length="297" mass="32379">MTPNNNVMFDDASVMWIDADYIYQNSKMPLSTFQQLLFSIPSKHRKMINDIGNPACNPPSCSFPPSNSTVKYMVDIYGAAVLALRCPSLFSDQLLTTFTANNYLSYCNRQRPCPQPPCPQPPFDCAQTQILDALEKLARQSDLVVNSLNQISLNQSNQFLELSNTLNTVRAQNAQILAALETTKDAILTRLNALVDDIKAALPDQSAQLQELADKLLDAINSVAQTLRGEMNNTNSILTNLASSITNINSTLNNLLAAIEGIGGDGGGLGDADRQALNEVLSLVTEIRNILMGTARK</sequence>
<accession>P17498</accession>
<name>VPHE_NPVOP</name>
<comment type="function">
    <text>Major component of the polyhedra envelope.</text>
</comment>
<comment type="subcellular location">
    <subcellularLocation>
        <location evidence="1">Virion membrane</location>
    </subcellularLocation>
</comment>
<comment type="similarity">
    <text evidence="2">Belongs to the baculoviridae PE family.</text>
</comment>
<protein>
    <recommendedName>
        <fullName>Polyhedral envelope protein</fullName>
        <shortName>PE</shortName>
    </recommendedName>
    <alternativeName>
        <fullName>Polyhedral calyx protein</fullName>
    </alternativeName>
    <alternativeName>
        <fullName>p32</fullName>
    </alternativeName>
</protein>
<dbReference type="EMBL" id="M24733">
    <property type="protein sequence ID" value="AAA46741.1"/>
    <property type="molecule type" value="Genomic_DNA"/>
</dbReference>
<dbReference type="EMBL" id="D13796">
    <property type="protein sequence ID" value="BAA02951.1"/>
    <property type="molecule type" value="Genomic_DNA"/>
</dbReference>
<dbReference type="EMBL" id="D13929">
    <property type="protein sequence ID" value="BAA03029.1"/>
    <property type="molecule type" value="Genomic_DNA"/>
</dbReference>
<dbReference type="EMBL" id="U75930">
    <property type="protein sequence ID" value="AAC59128.1"/>
    <property type="molecule type" value="Genomic_DNA"/>
</dbReference>
<dbReference type="PIR" id="A30120">
    <property type="entry name" value="VMNVPC"/>
</dbReference>
<dbReference type="RefSeq" id="NP_046285.1">
    <property type="nucleotide sequence ID" value="NC_001875.2"/>
</dbReference>
<dbReference type="SMR" id="P17498"/>
<dbReference type="KEGG" id="vg:912086"/>
<dbReference type="OrthoDB" id="8475at10239"/>
<dbReference type="Proteomes" id="UP000009248">
    <property type="component" value="Genome"/>
</dbReference>
<dbReference type="GO" id="GO:0016020">
    <property type="term" value="C:membrane"/>
    <property type="evidence" value="ECO:0007669"/>
    <property type="project" value="UniProtKB-KW"/>
</dbReference>
<dbReference type="GO" id="GO:0019028">
    <property type="term" value="C:viral capsid"/>
    <property type="evidence" value="ECO:0007669"/>
    <property type="project" value="InterPro"/>
</dbReference>
<dbReference type="GO" id="GO:0019031">
    <property type="term" value="C:viral envelope"/>
    <property type="evidence" value="ECO:0007669"/>
    <property type="project" value="UniProtKB-KW"/>
</dbReference>
<dbReference type="GO" id="GO:0039679">
    <property type="term" value="C:viral occlusion body"/>
    <property type="evidence" value="ECO:0007669"/>
    <property type="project" value="UniProtKB-KW"/>
</dbReference>
<dbReference type="GO" id="GO:0055036">
    <property type="term" value="C:virion membrane"/>
    <property type="evidence" value="ECO:0007669"/>
    <property type="project" value="UniProtKB-SubCell"/>
</dbReference>
<dbReference type="GO" id="GO:0005198">
    <property type="term" value="F:structural molecule activity"/>
    <property type="evidence" value="ECO:0007669"/>
    <property type="project" value="InterPro"/>
</dbReference>
<dbReference type="InterPro" id="IPR007601">
    <property type="entry name" value="Baculo_PEP_C"/>
</dbReference>
<dbReference type="InterPro" id="IPR007600">
    <property type="entry name" value="Baculo_PEP_N"/>
</dbReference>
<dbReference type="Pfam" id="PF04513">
    <property type="entry name" value="Baculo_PEP_C"/>
    <property type="match status" value="1"/>
</dbReference>
<dbReference type="Pfam" id="PF04512">
    <property type="entry name" value="Baculo_PEP_N"/>
    <property type="match status" value="1"/>
</dbReference>
<gene>
    <name type="ORF">ORF129</name>
</gene>
<proteinExistence type="inferred from homology"/>